<evidence type="ECO:0000255" key="1">
    <source>
        <dbReference type="HAMAP-Rule" id="MF_00685"/>
    </source>
</evidence>
<evidence type="ECO:0000305" key="2"/>
<keyword id="KW-0119">Carbohydrate metabolism</keyword>
<keyword id="KW-0320">Glycogen biosynthesis</keyword>
<keyword id="KW-0321">Glycogen metabolism</keyword>
<keyword id="KW-0328">Glycosyltransferase</keyword>
<keyword id="KW-1185">Reference proteome</keyword>
<keyword id="KW-0808">Transferase</keyword>
<reference key="1">
    <citation type="journal article" date="2005" name="Nucleic Acids Res.">
        <title>The genome sequence of Xanthomonas oryzae pathovar oryzae KACC10331, the bacterial blight pathogen of rice.</title>
        <authorList>
            <person name="Lee B.-M."/>
            <person name="Park Y.-J."/>
            <person name="Park D.-S."/>
            <person name="Kang H.-W."/>
            <person name="Kim J.-G."/>
            <person name="Song E.-S."/>
            <person name="Park I.-C."/>
            <person name="Yoon U.-H."/>
            <person name="Hahn J.-H."/>
            <person name="Koo B.-S."/>
            <person name="Lee G.-B."/>
            <person name="Kim H."/>
            <person name="Park H.-S."/>
            <person name="Yoon K.-O."/>
            <person name="Kim J.-H."/>
            <person name="Jung C.-H."/>
            <person name="Koh N.-H."/>
            <person name="Seo J.-S."/>
            <person name="Go S.-J."/>
        </authorList>
    </citation>
    <scope>NUCLEOTIDE SEQUENCE [LARGE SCALE GENOMIC DNA]</scope>
    <source>
        <strain>KACC10331 / KXO85</strain>
    </source>
</reference>
<gene>
    <name evidence="1" type="primary">glgB2</name>
    <name type="ordered locus">XOO0113</name>
</gene>
<sequence>MSQTLQALADGLPVDAFAVLGPHPLADGRRQVRVLAPGAEAMGLIDSRGKLLARMQASAIDGVFEGILSIEGPYRLRIVWPDMVQEIEDPYAFAVTLDESLLLQIAAGDGQALRRALGAQHVQCGEVPGVRFAVWAPHAQRVAVVGDFNGWDVRRHPMRQRIGGFWELFLPRVEAGPRYKYAVTAADGRVLLKADPVARQTELPPATASVVPGTDTFAWTDAAWMAKRDPSAVPAPLSIYEVHAASWRRDGHNQPLDWPTLAEQLIPYVQQLRFTHIELLPITEHPFGGSWGYQPLGLYAPTARHGSPDGFAQFVDACHRAGIGVILDWVSAHFPDDAHGLAQFDGAALYEHADPREGMHRDWNTLIYNYGRPEVTAYLLGSALEWIDHYHLDGLRVDAVASMLYRDYGRAEGEWVPNAHGGRENLEAVAFLRQLNREIAAHFPGVLTIAEESTAWPGVTAAISDGGLGFTHKWNMGWMHDTLSYMQRDPAERAHHHSQLTFGLVYAFDERFVLPISHDEVVHGTGGLLGQMPGDDWRRFANLRAYLALMWAHPGDKLLFMGAEFGQWADWNHDQSLDWHLLEGARHRGVQLLVGDLNATLRRTPALYRGTHRAKGFDWSVADDARNSVLAFIRHDPDGGGVPLLAVSNLTAQPLHDYGVGVPRAGAWREILNTDSAHYGGSNLGNSGRLATEPMGMHGHAQRLRLTLPPLATIYLQAEK</sequence>
<proteinExistence type="inferred from homology"/>
<dbReference type="EC" id="2.4.1.18" evidence="1"/>
<dbReference type="EMBL" id="AE013598">
    <property type="protein sequence ID" value="AAW73367.1"/>
    <property type="status" value="ALT_INIT"/>
    <property type="molecule type" value="Genomic_DNA"/>
</dbReference>
<dbReference type="SMR" id="Q5H6Q3"/>
<dbReference type="STRING" id="291331.XOO0113"/>
<dbReference type="CAZy" id="CBM48">
    <property type="family name" value="Carbohydrate-Binding Module Family 48"/>
</dbReference>
<dbReference type="CAZy" id="GH13">
    <property type="family name" value="Glycoside Hydrolase Family 13"/>
</dbReference>
<dbReference type="KEGG" id="xoo:XOO0113"/>
<dbReference type="HOGENOM" id="CLU_004245_3_2_6"/>
<dbReference type="UniPathway" id="UPA00164"/>
<dbReference type="Proteomes" id="UP000006735">
    <property type="component" value="Chromosome"/>
</dbReference>
<dbReference type="GO" id="GO:0005829">
    <property type="term" value="C:cytosol"/>
    <property type="evidence" value="ECO:0007669"/>
    <property type="project" value="TreeGrafter"/>
</dbReference>
<dbReference type="GO" id="GO:0003844">
    <property type="term" value="F:1,4-alpha-glucan branching enzyme activity"/>
    <property type="evidence" value="ECO:0007669"/>
    <property type="project" value="UniProtKB-UniRule"/>
</dbReference>
<dbReference type="GO" id="GO:0043169">
    <property type="term" value="F:cation binding"/>
    <property type="evidence" value="ECO:0007669"/>
    <property type="project" value="InterPro"/>
</dbReference>
<dbReference type="GO" id="GO:0004553">
    <property type="term" value="F:hydrolase activity, hydrolyzing O-glycosyl compounds"/>
    <property type="evidence" value="ECO:0007669"/>
    <property type="project" value="InterPro"/>
</dbReference>
<dbReference type="GO" id="GO:0005978">
    <property type="term" value="P:glycogen biosynthetic process"/>
    <property type="evidence" value="ECO:0007669"/>
    <property type="project" value="UniProtKB-UniRule"/>
</dbReference>
<dbReference type="CDD" id="cd11322">
    <property type="entry name" value="AmyAc_Glg_BE"/>
    <property type="match status" value="1"/>
</dbReference>
<dbReference type="CDD" id="cd02855">
    <property type="entry name" value="E_set_GBE_prok_N"/>
    <property type="match status" value="1"/>
</dbReference>
<dbReference type="FunFam" id="2.60.40.1180:FF:000002">
    <property type="entry name" value="1,4-alpha-glucan branching enzyme GlgB"/>
    <property type="match status" value="1"/>
</dbReference>
<dbReference type="FunFam" id="3.20.20.80:FF:000003">
    <property type="entry name" value="1,4-alpha-glucan branching enzyme GlgB"/>
    <property type="match status" value="1"/>
</dbReference>
<dbReference type="Gene3D" id="3.20.20.80">
    <property type="entry name" value="Glycosidases"/>
    <property type="match status" value="1"/>
</dbReference>
<dbReference type="Gene3D" id="2.60.40.1180">
    <property type="entry name" value="Golgi alpha-mannosidase II"/>
    <property type="match status" value="1"/>
</dbReference>
<dbReference type="Gene3D" id="2.60.40.10">
    <property type="entry name" value="Immunoglobulins"/>
    <property type="match status" value="2"/>
</dbReference>
<dbReference type="HAMAP" id="MF_00685">
    <property type="entry name" value="GlgB"/>
    <property type="match status" value="1"/>
</dbReference>
<dbReference type="InterPro" id="IPR006048">
    <property type="entry name" value="A-amylase/branching_C"/>
</dbReference>
<dbReference type="InterPro" id="IPR037439">
    <property type="entry name" value="Branching_enzy"/>
</dbReference>
<dbReference type="InterPro" id="IPR006407">
    <property type="entry name" value="GlgB"/>
</dbReference>
<dbReference type="InterPro" id="IPR054169">
    <property type="entry name" value="GlgB_N"/>
</dbReference>
<dbReference type="InterPro" id="IPR044143">
    <property type="entry name" value="GlgB_N_E_set_prok"/>
</dbReference>
<dbReference type="InterPro" id="IPR006047">
    <property type="entry name" value="Glyco_hydro_13_cat_dom"/>
</dbReference>
<dbReference type="InterPro" id="IPR004193">
    <property type="entry name" value="Glyco_hydro_13_N"/>
</dbReference>
<dbReference type="InterPro" id="IPR013780">
    <property type="entry name" value="Glyco_hydro_b"/>
</dbReference>
<dbReference type="InterPro" id="IPR017853">
    <property type="entry name" value="Glycoside_hydrolase_SF"/>
</dbReference>
<dbReference type="InterPro" id="IPR013783">
    <property type="entry name" value="Ig-like_fold"/>
</dbReference>
<dbReference type="InterPro" id="IPR014756">
    <property type="entry name" value="Ig_E-set"/>
</dbReference>
<dbReference type="NCBIfam" id="TIGR01515">
    <property type="entry name" value="branching_enzym"/>
    <property type="match status" value="1"/>
</dbReference>
<dbReference type="NCBIfam" id="NF003811">
    <property type="entry name" value="PRK05402.1"/>
    <property type="match status" value="1"/>
</dbReference>
<dbReference type="NCBIfam" id="NF008967">
    <property type="entry name" value="PRK12313.1"/>
    <property type="match status" value="1"/>
</dbReference>
<dbReference type="NCBIfam" id="NF009221">
    <property type="entry name" value="PRK12568.1"/>
    <property type="match status" value="1"/>
</dbReference>
<dbReference type="PANTHER" id="PTHR43651">
    <property type="entry name" value="1,4-ALPHA-GLUCAN-BRANCHING ENZYME"/>
    <property type="match status" value="1"/>
</dbReference>
<dbReference type="PANTHER" id="PTHR43651:SF3">
    <property type="entry name" value="1,4-ALPHA-GLUCAN-BRANCHING ENZYME"/>
    <property type="match status" value="1"/>
</dbReference>
<dbReference type="Pfam" id="PF00128">
    <property type="entry name" value="Alpha-amylase"/>
    <property type="match status" value="1"/>
</dbReference>
<dbReference type="Pfam" id="PF02806">
    <property type="entry name" value="Alpha-amylase_C"/>
    <property type="match status" value="1"/>
</dbReference>
<dbReference type="Pfam" id="PF02922">
    <property type="entry name" value="CBM_48"/>
    <property type="match status" value="1"/>
</dbReference>
<dbReference type="Pfam" id="PF22019">
    <property type="entry name" value="GlgB_N"/>
    <property type="match status" value="1"/>
</dbReference>
<dbReference type="PIRSF" id="PIRSF000463">
    <property type="entry name" value="GlgB"/>
    <property type="match status" value="1"/>
</dbReference>
<dbReference type="SMART" id="SM00642">
    <property type="entry name" value="Aamy"/>
    <property type="match status" value="1"/>
</dbReference>
<dbReference type="SUPFAM" id="SSF51445">
    <property type="entry name" value="(Trans)glycosidases"/>
    <property type="match status" value="1"/>
</dbReference>
<dbReference type="SUPFAM" id="SSF81296">
    <property type="entry name" value="E set domains"/>
    <property type="match status" value="1"/>
</dbReference>
<dbReference type="SUPFAM" id="SSF51011">
    <property type="entry name" value="Glycosyl hydrolase domain"/>
    <property type="match status" value="1"/>
</dbReference>
<name>GLGB2_XANOR</name>
<organism>
    <name type="scientific">Xanthomonas oryzae pv. oryzae (strain KACC10331 / KXO85)</name>
    <dbReference type="NCBI Taxonomy" id="291331"/>
    <lineage>
        <taxon>Bacteria</taxon>
        <taxon>Pseudomonadati</taxon>
        <taxon>Pseudomonadota</taxon>
        <taxon>Gammaproteobacteria</taxon>
        <taxon>Lysobacterales</taxon>
        <taxon>Lysobacteraceae</taxon>
        <taxon>Xanthomonas</taxon>
    </lineage>
</organism>
<comment type="function">
    <text evidence="1">Catalyzes the formation of the alpha-1,6-glucosidic linkages in glycogen by scission of a 1,4-alpha-linked oligosaccharide from growing alpha-1,4-glucan chains and the subsequent attachment of the oligosaccharide to the alpha-1,6 position.</text>
</comment>
<comment type="catalytic activity">
    <reaction evidence="1">
        <text>Transfers a segment of a (1-&gt;4)-alpha-D-glucan chain to a primary hydroxy group in a similar glucan chain.</text>
        <dbReference type="EC" id="2.4.1.18"/>
    </reaction>
</comment>
<comment type="pathway">
    <text evidence="1">Glycan biosynthesis; glycogen biosynthesis.</text>
</comment>
<comment type="subunit">
    <text evidence="1">Monomer.</text>
</comment>
<comment type="similarity">
    <text evidence="1">Belongs to the glycosyl hydrolase 13 family. GlgB subfamily.</text>
</comment>
<comment type="sequence caution" evidence="2">
    <conflict type="erroneous initiation">
        <sequence resource="EMBL-CDS" id="AAW73367"/>
    </conflict>
</comment>
<accession>Q5H6Q3</accession>
<feature type="chain" id="PRO_0000188769" description="1,4-alpha-glucan branching enzyme GlgB 2">
    <location>
        <begin position="1"/>
        <end position="720"/>
    </location>
</feature>
<feature type="active site" description="Nucleophile" evidence="1">
    <location>
        <position position="398"/>
    </location>
</feature>
<feature type="active site" description="Proton donor" evidence="1">
    <location>
        <position position="451"/>
    </location>
</feature>
<protein>
    <recommendedName>
        <fullName evidence="1">1,4-alpha-glucan branching enzyme GlgB 2</fullName>
        <ecNumber evidence="1">2.4.1.18</ecNumber>
    </recommendedName>
    <alternativeName>
        <fullName evidence="1">1,4-alpha-D-glucan:1,4-alpha-D-glucan 6-glucosyl-transferase 2</fullName>
    </alternativeName>
    <alternativeName>
        <fullName evidence="1">Alpha-(1-&gt;4)-glucan branching enzyme 2</fullName>
    </alternativeName>
    <alternativeName>
        <fullName evidence="1">Glycogen branching enzyme 2</fullName>
        <shortName evidence="1">BE 2</shortName>
    </alternativeName>
</protein>